<protein>
    <recommendedName>
        <fullName evidence="1">Tol-Pal system protein TolB</fullName>
    </recommendedName>
</protein>
<feature type="signal peptide" evidence="1">
    <location>
        <begin position="1"/>
        <end position="36"/>
    </location>
</feature>
<feature type="chain" id="PRO_5000267631" description="Tol-Pal system protein TolB" evidence="1">
    <location>
        <begin position="37"/>
        <end position="446"/>
    </location>
</feature>
<feature type="region of interest" description="Disordered" evidence="2">
    <location>
        <begin position="424"/>
        <end position="446"/>
    </location>
</feature>
<comment type="function">
    <text evidence="1">Part of the Tol-Pal system, which plays a role in outer membrane invagination during cell division and is important for maintaining outer membrane integrity.</text>
</comment>
<comment type="subunit">
    <text evidence="1">The Tol-Pal system is composed of five core proteins: the inner membrane proteins TolA, TolQ and TolR, the periplasmic protein TolB and the outer membrane protein Pal. They form a network linking the inner and outer membranes and the peptidoglycan layer.</text>
</comment>
<comment type="subcellular location">
    <subcellularLocation>
        <location evidence="1">Periplasm</location>
    </subcellularLocation>
</comment>
<comment type="similarity">
    <text evidence="1">Belongs to the TolB family.</text>
</comment>
<evidence type="ECO:0000255" key="1">
    <source>
        <dbReference type="HAMAP-Rule" id="MF_00671"/>
    </source>
</evidence>
<evidence type="ECO:0000256" key="2">
    <source>
        <dbReference type="SAM" id="MobiDB-lite"/>
    </source>
</evidence>
<gene>
    <name evidence="1" type="primary">tolB</name>
    <name type="ordered locus">Plav_2122</name>
</gene>
<proteinExistence type="inferred from homology"/>
<organism>
    <name type="scientific">Parvibaculum lavamentivorans (strain DS-1 / DSM 13023 / NCIMB 13966)</name>
    <dbReference type="NCBI Taxonomy" id="402881"/>
    <lineage>
        <taxon>Bacteria</taxon>
        <taxon>Pseudomonadati</taxon>
        <taxon>Pseudomonadota</taxon>
        <taxon>Alphaproteobacteria</taxon>
        <taxon>Hyphomicrobiales</taxon>
        <taxon>Parvibaculaceae</taxon>
        <taxon>Parvibaculum</taxon>
    </lineage>
</organism>
<name>TOLB_PARL1</name>
<accession>A7HV03</accession>
<reference key="1">
    <citation type="journal article" date="2011" name="Stand. Genomic Sci.">
        <title>Complete genome sequence of Parvibaculum lavamentivorans type strain (DS-1(T)).</title>
        <authorList>
            <person name="Schleheck D."/>
            <person name="Weiss M."/>
            <person name="Pitluck S."/>
            <person name="Bruce D."/>
            <person name="Land M.L."/>
            <person name="Han S."/>
            <person name="Saunders E."/>
            <person name="Tapia R."/>
            <person name="Detter C."/>
            <person name="Brettin T."/>
            <person name="Han J."/>
            <person name="Woyke T."/>
            <person name="Goodwin L."/>
            <person name="Pennacchio L."/>
            <person name="Nolan M."/>
            <person name="Cook A.M."/>
            <person name="Kjelleberg S."/>
            <person name="Thomas T."/>
        </authorList>
    </citation>
    <scope>NUCLEOTIDE SEQUENCE [LARGE SCALE GENOMIC DNA]</scope>
    <source>
        <strain>DS-1 / DSM 13023 / NCIMB 13966</strain>
    </source>
</reference>
<keyword id="KW-0131">Cell cycle</keyword>
<keyword id="KW-0132">Cell division</keyword>
<keyword id="KW-0574">Periplasm</keyword>
<keyword id="KW-1185">Reference proteome</keyword>
<keyword id="KW-0732">Signal</keyword>
<sequence>MMDVQTVRRGNAVQSLMSKLILPLVMAVAFALPARAALQIDITQGNVDPLPIAITDFVGEGSVGADMSAVISNNLERSGLFRPLPKASFIEKVSDINVQPRFGDWRVINSQALVTGQTRMEADGRLRVEFRLWDVLGEQQLTGLQFFTTPDNWRRVAHLISDAIYKRLTGEDGYFDTRIVYVSETGPKNARVKRLTIMDQDGHNPRMLTRGNELVLTPRFSPNSQEITYLAYRNNQPRVYVLDIETGQQEVVGEFPGMTFAPRFSPDGQRIIMSLQRGGNSDIYTMDLRSRQVVRLTNTAAIDTAPSYSPDGRQITFESDRGGSQQIYVMDASGSNQRRISFGQGSYATPVWSPRGDLIAFTKITGGRFVIGVMRPDGTGERVLTDGFHNEGPTWAPNGRVLMFFRETRGAQGGPSLWSVDVTGYNERPSPTPTFASDPAWSPRIQ</sequence>
<dbReference type="EMBL" id="CP000774">
    <property type="protein sequence ID" value="ABS63736.1"/>
    <property type="molecule type" value="Genomic_DNA"/>
</dbReference>
<dbReference type="SMR" id="A7HV03"/>
<dbReference type="STRING" id="402881.Plav_2122"/>
<dbReference type="KEGG" id="pla:Plav_2122"/>
<dbReference type="eggNOG" id="COG0823">
    <property type="taxonomic scope" value="Bacteria"/>
</dbReference>
<dbReference type="HOGENOM" id="CLU_047123_0_0_5"/>
<dbReference type="OrthoDB" id="9802240at2"/>
<dbReference type="Proteomes" id="UP000006377">
    <property type="component" value="Chromosome"/>
</dbReference>
<dbReference type="GO" id="GO:0042597">
    <property type="term" value="C:periplasmic space"/>
    <property type="evidence" value="ECO:0007669"/>
    <property type="project" value="UniProtKB-SubCell"/>
</dbReference>
<dbReference type="GO" id="GO:0051301">
    <property type="term" value="P:cell division"/>
    <property type="evidence" value="ECO:0007669"/>
    <property type="project" value="UniProtKB-UniRule"/>
</dbReference>
<dbReference type="GO" id="GO:0017038">
    <property type="term" value="P:protein import"/>
    <property type="evidence" value="ECO:0007669"/>
    <property type="project" value="InterPro"/>
</dbReference>
<dbReference type="Gene3D" id="2.120.10.30">
    <property type="entry name" value="TolB, C-terminal domain"/>
    <property type="match status" value="1"/>
</dbReference>
<dbReference type="Gene3D" id="3.40.50.10070">
    <property type="entry name" value="TolB, N-terminal domain"/>
    <property type="match status" value="1"/>
</dbReference>
<dbReference type="HAMAP" id="MF_00671">
    <property type="entry name" value="TolB"/>
    <property type="match status" value="1"/>
</dbReference>
<dbReference type="InterPro" id="IPR011042">
    <property type="entry name" value="6-blade_b-propeller_TolB-like"/>
</dbReference>
<dbReference type="InterPro" id="IPR011659">
    <property type="entry name" value="PD40"/>
</dbReference>
<dbReference type="InterPro" id="IPR014167">
    <property type="entry name" value="Tol-Pal_TolB"/>
</dbReference>
<dbReference type="InterPro" id="IPR007195">
    <property type="entry name" value="TolB_N"/>
</dbReference>
<dbReference type="NCBIfam" id="TIGR02800">
    <property type="entry name" value="propeller_TolB"/>
    <property type="match status" value="1"/>
</dbReference>
<dbReference type="PANTHER" id="PTHR36842:SF1">
    <property type="entry name" value="PROTEIN TOLB"/>
    <property type="match status" value="1"/>
</dbReference>
<dbReference type="PANTHER" id="PTHR36842">
    <property type="entry name" value="PROTEIN TOLB HOMOLOG"/>
    <property type="match status" value="1"/>
</dbReference>
<dbReference type="Pfam" id="PF07676">
    <property type="entry name" value="PD40"/>
    <property type="match status" value="3"/>
</dbReference>
<dbReference type="Pfam" id="PF04052">
    <property type="entry name" value="TolB_N"/>
    <property type="match status" value="1"/>
</dbReference>
<dbReference type="SUPFAM" id="SSF52964">
    <property type="entry name" value="TolB, N-terminal domain"/>
    <property type="match status" value="1"/>
</dbReference>
<dbReference type="SUPFAM" id="SSF69304">
    <property type="entry name" value="Tricorn protease N-terminal domain"/>
    <property type="match status" value="1"/>
</dbReference>